<reference key="1">
    <citation type="journal article" date="2005" name="BMC Biol.">
        <title>The complete chloroplast DNA sequences of the charophycean green algae Staurastrum and Zygnema reveal that the chloroplast genome underwent extensive changes during the evolution of the Zygnematales.</title>
        <authorList>
            <person name="Turmel M."/>
            <person name="Otis C."/>
            <person name="Lemieux C."/>
        </authorList>
    </citation>
    <scope>NUCLEOTIDE SEQUENCE [LARGE SCALE GENOMIC DNA]</scope>
</reference>
<feature type="chain" id="PRO_0000224134" description="DNA-directed RNA polymerase subunit beta">
    <location>
        <begin position="1"/>
        <end position="1068"/>
    </location>
</feature>
<protein>
    <recommendedName>
        <fullName evidence="1">DNA-directed RNA polymerase subunit beta</fullName>
        <ecNumber evidence="1">2.7.7.6</ecNumber>
    </recommendedName>
    <alternativeName>
        <fullName evidence="1">PEP</fullName>
    </alternativeName>
    <alternativeName>
        <fullName evidence="1">Plastid-encoded RNA polymerase subunit beta</fullName>
        <shortName evidence="1">RNA polymerase subunit beta</shortName>
    </alternativeName>
</protein>
<evidence type="ECO:0000255" key="1">
    <source>
        <dbReference type="HAMAP-Rule" id="MF_01321"/>
    </source>
</evidence>
<organism>
    <name type="scientific">Staurastrum punctulatum</name>
    <name type="common">Green alga</name>
    <name type="synonym">Cosmoastrum punctulatum</name>
    <dbReference type="NCBI Taxonomy" id="102822"/>
    <lineage>
        <taxon>Eukaryota</taxon>
        <taxon>Viridiplantae</taxon>
        <taxon>Streptophyta</taxon>
        <taxon>Zygnematophyceae</taxon>
        <taxon>Zygnematophycidae</taxon>
        <taxon>Desmidiales</taxon>
        <taxon>Desmidiaceae</taxon>
        <taxon>Staurastrum</taxon>
    </lineage>
</organism>
<geneLocation type="chloroplast"/>
<name>RPOB_STAPU</name>
<proteinExistence type="inferred from homology"/>
<sequence length="1068" mass="120562">MEMNMFILPDFLQIQIESFRRFLHNCIFEELSKFPIIYDSNQGIEFKLIPEKYLLTEPLFTEREAVYKFTTYSSDLYVPIQLTLTKEKKSRIQTVCLGSLPLMTPQGTFVINGVSWTIVNQILRNPGIYYVLNRNGMYTATILCLDVDKRLRLEIDKKGRLSVRINNRHKIPLVFLLIALGLDINDIPDWLQSRTKKLEDLLSGLKNEGERTLELIALYKQLPGPKKVKPKANPLIISEQIQQWCAQVYKLGTSGRLNLNRRLNLNFSKSNDSLLPQDLIAAAELLVKMSLLHPGPKGGKDSSDDIDHLKNKHVISVAEMLRKQLSLCLIDLQIQVRRAIRRGISSKRILSPRSMMISRPLTQMFNQFFGSHELIQFLDQTNPLAEMAHKRKLSLLGPGGLTRRTASFRTRDIHPSHYGRICTIETSEGMNAGVIPSLSICARVDSEGVIENPLHKIGGNIKEQYTVYVRAGRDERLKIGTNNCLAIGQKGQERSTSTQYQQEFVSMSWDQINLRSILPIQYFAIGASLIPFLEHNDATRTLMGSSMQRQAVPLVKPEKSIVGTGIEAHISLDSGTVLISLKDGKIKYVDGKQIVLVDKDNVQQKFNLITYERSNNGTCIHQRPTVKIGFSVRKGQLLADGSATVGGELALGKNVLVAYMPWEGYNFEDAVLISDRLVNEDIYTSIHIQRYEISVQENIEGFDIITREIPHVDKYLLRHLDYRGIIKIGAWVEPGDVLVGKLAPLEAPHLLRSPEGKLLQAIFGVQAITTRESCLKLPAGGTGRVIDVRWIEQQGPSGVSSLHVYILQKRKIQVGDKVAGRHGNKGVVSRILPREDMPYMQDGTPIDMVLSPLGVPSRMNVGQLFECLLGLAGSYLNNHYRIMPFDERFEREASRKLVFSELYKARKFTGYPWLFEPNSPGKSSLFDGRTGEIFEQSITVGKAYMMKLIHMVDEKIHARSSGPYALVTQQPLRGRSNKGGQRVGEMEVWAFEGFGAAYMLQEILTIKSDHVKGRSQVRGAIVAKESIPKPIDPPDCFRLLIRELRCLGIEIKHTIISEKNFFLDQKPI</sequence>
<accession>Q32RW5</accession>
<dbReference type="EC" id="2.7.7.6" evidence="1"/>
<dbReference type="EMBL" id="AY958085">
    <property type="protein sequence ID" value="AAX45747.1"/>
    <property type="molecule type" value="Genomic_DNA"/>
</dbReference>
<dbReference type="RefSeq" id="YP_636411.1">
    <property type="nucleotide sequence ID" value="NC_008116.1"/>
</dbReference>
<dbReference type="SMR" id="Q32RW5"/>
<dbReference type="GeneID" id="4108609"/>
<dbReference type="GO" id="GO:0009507">
    <property type="term" value="C:chloroplast"/>
    <property type="evidence" value="ECO:0007669"/>
    <property type="project" value="UniProtKB-SubCell"/>
</dbReference>
<dbReference type="GO" id="GO:0000428">
    <property type="term" value="C:DNA-directed RNA polymerase complex"/>
    <property type="evidence" value="ECO:0007669"/>
    <property type="project" value="UniProtKB-KW"/>
</dbReference>
<dbReference type="GO" id="GO:0005739">
    <property type="term" value="C:mitochondrion"/>
    <property type="evidence" value="ECO:0007669"/>
    <property type="project" value="GOC"/>
</dbReference>
<dbReference type="GO" id="GO:0003677">
    <property type="term" value="F:DNA binding"/>
    <property type="evidence" value="ECO:0007669"/>
    <property type="project" value="UniProtKB-UniRule"/>
</dbReference>
<dbReference type="GO" id="GO:0003899">
    <property type="term" value="F:DNA-directed RNA polymerase activity"/>
    <property type="evidence" value="ECO:0007669"/>
    <property type="project" value="UniProtKB-UniRule"/>
</dbReference>
<dbReference type="GO" id="GO:0032549">
    <property type="term" value="F:ribonucleoside binding"/>
    <property type="evidence" value="ECO:0007669"/>
    <property type="project" value="InterPro"/>
</dbReference>
<dbReference type="GO" id="GO:0006351">
    <property type="term" value="P:DNA-templated transcription"/>
    <property type="evidence" value="ECO:0007669"/>
    <property type="project" value="UniProtKB-UniRule"/>
</dbReference>
<dbReference type="CDD" id="cd00653">
    <property type="entry name" value="RNA_pol_B_RPB2"/>
    <property type="match status" value="1"/>
</dbReference>
<dbReference type="Gene3D" id="2.40.50.100">
    <property type="match status" value="1"/>
</dbReference>
<dbReference type="Gene3D" id="2.40.50.150">
    <property type="match status" value="1"/>
</dbReference>
<dbReference type="Gene3D" id="3.90.1100.10">
    <property type="match status" value="1"/>
</dbReference>
<dbReference type="Gene3D" id="2.30.150.10">
    <property type="entry name" value="DNA-directed RNA polymerase, beta subunit, external 1 domain"/>
    <property type="match status" value="1"/>
</dbReference>
<dbReference type="Gene3D" id="2.40.270.10">
    <property type="entry name" value="DNA-directed RNA polymerase, subunit 2, domain 6"/>
    <property type="match status" value="1"/>
</dbReference>
<dbReference type="Gene3D" id="3.90.1800.10">
    <property type="entry name" value="RNA polymerase alpha subunit dimerisation domain"/>
    <property type="match status" value="1"/>
</dbReference>
<dbReference type="Gene3D" id="3.90.1110.10">
    <property type="entry name" value="RNA polymerase Rpb2, domain 2"/>
    <property type="match status" value="1"/>
</dbReference>
<dbReference type="HAMAP" id="MF_01321">
    <property type="entry name" value="RNApol_bact_RpoB"/>
    <property type="match status" value="1"/>
</dbReference>
<dbReference type="InterPro" id="IPR042107">
    <property type="entry name" value="DNA-dir_RNA_pol_bsu_ext_1_sf"/>
</dbReference>
<dbReference type="InterPro" id="IPR015712">
    <property type="entry name" value="DNA-dir_RNA_pol_su2"/>
</dbReference>
<dbReference type="InterPro" id="IPR007120">
    <property type="entry name" value="DNA-dir_RNAP_su2_dom"/>
</dbReference>
<dbReference type="InterPro" id="IPR037033">
    <property type="entry name" value="DNA-dir_RNAP_su2_hyb_sf"/>
</dbReference>
<dbReference type="InterPro" id="IPR010243">
    <property type="entry name" value="RNA_pol_bsu_bac"/>
</dbReference>
<dbReference type="InterPro" id="IPR007121">
    <property type="entry name" value="RNA_pol_bsu_CS"/>
</dbReference>
<dbReference type="InterPro" id="IPR007644">
    <property type="entry name" value="RNA_pol_bsu_protrusion"/>
</dbReference>
<dbReference type="InterPro" id="IPR007642">
    <property type="entry name" value="RNA_pol_Rpb2_2"/>
</dbReference>
<dbReference type="InterPro" id="IPR037034">
    <property type="entry name" value="RNA_pol_Rpb2_2_sf"/>
</dbReference>
<dbReference type="InterPro" id="IPR007645">
    <property type="entry name" value="RNA_pol_Rpb2_3"/>
</dbReference>
<dbReference type="InterPro" id="IPR007641">
    <property type="entry name" value="RNA_pol_Rpb2_7"/>
</dbReference>
<dbReference type="InterPro" id="IPR014724">
    <property type="entry name" value="RNA_pol_RPB2_OB-fold"/>
</dbReference>
<dbReference type="NCBIfam" id="NF001616">
    <property type="entry name" value="PRK00405.1"/>
    <property type="match status" value="1"/>
</dbReference>
<dbReference type="PANTHER" id="PTHR20856">
    <property type="entry name" value="DNA-DIRECTED RNA POLYMERASE I SUBUNIT 2"/>
    <property type="match status" value="1"/>
</dbReference>
<dbReference type="Pfam" id="PF04563">
    <property type="entry name" value="RNA_pol_Rpb2_1"/>
    <property type="match status" value="1"/>
</dbReference>
<dbReference type="Pfam" id="PF04561">
    <property type="entry name" value="RNA_pol_Rpb2_2"/>
    <property type="match status" value="1"/>
</dbReference>
<dbReference type="Pfam" id="PF04565">
    <property type="entry name" value="RNA_pol_Rpb2_3"/>
    <property type="match status" value="1"/>
</dbReference>
<dbReference type="Pfam" id="PF00562">
    <property type="entry name" value="RNA_pol_Rpb2_6"/>
    <property type="match status" value="1"/>
</dbReference>
<dbReference type="Pfam" id="PF04560">
    <property type="entry name" value="RNA_pol_Rpb2_7"/>
    <property type="match status" value="1"/>
</dbReference>
<dbReference type="SUPFAM" id="SSF64484">
    <property type="entry name" value="beta and beta-prime subunits of DNA dependent RNA-polymerase"/>
    <property type="match status" value="1"/>
</dbReference>
<dbReference type="PROSITE" id="PS01166">
    <property type="entry name" value="RNA_POL_BETA"/>
    <property type="match status" value="1"/>
</dbReference>
<gene>
    <name evidence="1" type="primary">rpoB</name>
</gene>
<keyword id="KW-0150">Chloroplast</keyword>
<keyword id="KW-0240">DNA-directed RNA polymerase</keyword>
<keyword id="KW-0548">Nucleotidyltransferase</keyword>
<keyword id="KW-0934">Plastid</keyword>
<keyword id="KW-0804">Transcription</keyword>
<keyword id="KW-0808">Transferase</keyword>
<comment type="function">
    <text evidence="1">DNA-dependent RNA polymerase catalyzes the transcription of DNA into RNA using the four ribonucleoside triphosphates as substrates.</text>
</comment>
<comment type="catalytic activity">
    <reaction evidence="1">
        <text>RNA(n) + a ribonucleoside 5'-triphosphate = RNA(n+1) + diphosphate</text>
        <dbReference type="Rhea" id="RHEA:21248"/>
        <dbReference type="Rhea" id="RHEA-COMP:14527"/>
        <dbReference type="Rhea" id="RHEA-COMP:17342"/>
        <dbReference type="ChEBI" id="CHEBI:33019"/>
        <dbReference type="ChEBI" id="CHEBI:61557"/>
        <dbReference type="ChEBI" id="CHEBI:140395"/>
        <dbReference type="EC" id="2.7.7.6"/>
    </reaction>
</comment>
<comment type="subunit">
    <text evidence="1">In plastids the minimal PEP RNA polymerase catalytic core is composed of four subunits: alpha, beta, beta', and beta''. When a (nuclear-encoded) sigma factor is associated with the core the holoenzyme is formed, which can initiate transcription.</text>
</comment>
<comment type="subcellular location">
    <subcellularLocation>
        <location>Plastid</location>
        <location>Chloroplast</location>
    </subcellularLocation>
</comment>
<comment type="similarity">
    <text evidence="1">Belongs to the RNA polymerase beta chain family.</text>
</comment>